<name>CCMC_RHOCB</name>
<comment type="function">
    <text>Required for the export of heme to the periplasm for the biogenesis of c-type cytochromes.</text>
</comment>
<comment type="subcellular location">
    <subcellularLocation>
        <location evidence="2">Cell inner membrane</location>
        <topology evidence="2">Multi-pass membrane protein</topology>
    </subcellularLocation>
</comment>
<comment type="similarity">
    <text evidence="2">Belongs to the CcmC/CycZ/HelC family.</text>
</comment>
<gene>
    <name type="primary">helC</name>
    <name type="synonym">ccmC</name>
    <name type="ordered locus">RCAP_rcc01787</name>
</gene>
<dbReference type="EMBL" id="X63462">
    <property type="protein sequence ID" value="CAA45063.1"/>
    <property type="molecule type" value="Genomic_DNA"/>
</dbReference>
<dbReference type="EMBL" id="CP001312">
    <property type="protein sequence ID" value="ADE85532.1"/>
    <property type="molecule type" value="Genomic_DNA"/>
</dbReference>
<dbReference type="PIR" id="S23665">
    <property type="entry name" value="S23665"/>
</dbReference>
<dbReference type="RefSeq" id="WP_013067511.1">
    <property type="nucleotide sequence ID" value="NC_014034.1"/>
</dbReference>
<dbReference type="SMR" id="P29961"/>
<dbReference type="STRING" id="272942.RCAP_rcc01787"/>
<dbReference type="TCDB" id="9.B.14.2.1">
    <property type="family name" value="the putative heme handling protein (hhp) family"/>
</dbReference>
<dbReference type="GeneID" id="31490662"/>
<dbReference type="KEGG" id="rcp:RCAP_rcc01787"/>
<dbReference type="eggNOG" id="COG0755">
    <property type="taxonomic scope" value="Bacteria"/>
</dbReference>
<dbReference type="HOGENOM" id="CLU_066538_2_1_5"/>
<dbReference type="OrthoDB" id="9778550at2"/>
<dbReference type="Proteomes" id="UP000002361">
    <property type="component" value="Chromosome"/>
</dbReference>
<dbReference type="GO" id="GO:0005886">
    <property type="term" value="C:plasma membrane"/>
    <property type="evidence" value="ECO:0007669"/>
    <property type="project" value="UniProtKB-SubCell"/>
</dbReference>
<dbReference type="GO" id="GO:0020037">
    <property type="term" value="F:heme binding"/>
    <property type="evidence" value="ECO:0007669"/>
    <property type="project" value="InterPro"/>
</dbReference>
<dbReference type="GO" id="GO:0015232">
    <property type="term" value="F:heme transmembrane transporter activity"/>
    <property type="evidence" value="ECO:0007669"/>
    <property type="project" value="InterPro"/>
</dbReference>
<dbReference type="GO" id="GO:0017004">
    <property type="term" value="P:cytochrome complex assembly"/>
    <property type="evidence" value="ECO:0007669"/>
    <property type="project" value="UniProtKB-KW"/>
</dbReference>
<dbReference type="InterPro" id="IPR002541">
    <property type="entry name" value="Cyt_c_assembly"/>
</dbReference>
<dbReference type="InterPro" id="IPR003557">
    <property type="entry name" value="Cyt_c_biogenesis_CcmC"/>
</dbReference>
<dbReference type="InterPro" id="IPR045062">
    <property type="entry name" value="Cyt_c_biogenesis_CcsA/CcmC"/>
</dbReference>
<dbReference type="NCBIfam" id="TIGR01191">
    <property type="entry name" value="ccmC"/>
    <property type="match status" value="1"/>
</dbReference>
<dbReference type="PANTHER" id="PTHR30071:SF1">
    <property type="entry name" value="CYTOCHROME B_B6 PROTEIN-RELATED"/>
    <property type="match status" value="1"/>
</dbReference>
<dbReference type="PANTHER" id="PTHR30071">
    <property type="entry name" value="HEME EXPORTER PROTEIN C"/>
    <property type="match status" value="1"/>
</dbReference>
<dbReference type="Pfam" id="PF01578">
    <property type="entry name" value="Cytochrom_C_asm"/>
    <property type="match status" value="1"/>
</dbReference>
<dbReference type="PRINTS" id="PR01386">
    <property type="entry name" value="CCMCBIOGNSIS"/>
</dbReference>
<evidence type="ECO:0000255" key="1"/>
<evidence type="ECO:0000305" key="2"/>
<proteinExistence type="inferred from homology"/>
<accession>P29961</accession>
<accession>D5AU93</accession>
<organism>
    <name type="scientific">Rhodobacter capsulatus (strain ATCC BAA-309 / NBRC 16581 / SB1003)</name>
    <dbReference type="NCBI Taxonomy" id="272942"/>
    <lineage>
        <taxon>Bacteria</taxon>
        <taxon>Pseudomonadati</taxon>
        <taxon>Pseudomonadota</taxon>
        <taxon>Alphaproteobacteria</taxon>
        <taxon>Rhodobacterales</taxon>
        <taxon>Rhodobacter group</taxon>
        <taxon>Rhodobacter</taxon>
    </lineage>
</organism>
<sequence length="242" mass="27196">MSIWEYANPVKFMQTSGRLLPWVVAATVLTLLPGLVWGFFFTPVAAEFGATVKVIYVHVPAATLAINIWVMMLVASLIWLIRRHHVSALAAKAAAPIGMVMTLIALITGAFWGQPMWGTWWEWDPRLTSFLILFLFYLGYMALWEAIENPDTAADLTGVLCLVGSVFAVLSRYAAIFWNQGLHQGSTLSLDKEEHIADVYWQPLVLSIAGFGMLFVALLLLRTRTEIRARRLKALEQRERMA</sequence>
<reference key="1">
    <citation type="journal article" date="1992" name="Genes Dev.">
        <title>Bacterial cytochromes c biogenesis.</title>
        <authorList>
            <person name="Beckman D.L."/>
            <person name="Trawick D.R."/>
            <person name="Kranz R.G."/>
        </authorList>
    </citation>
    <scope>NUCLEOTIDE SEQUENCE [GENOMIC DNA]</scope>
    <source>
        <strain>ATCC BAA-309 / NBRC 16581 / SB1003</strain>
    </source>
</reference>
<reference key="2">
    <citation type="journal article" date="2010" name="J. Bacteriol.">
        <title>Complete genome sequence of the photosynthetic purple nonsulfur bacterium Rhodobacter capsulatus SB 1003.</title>
        <authorList>
            <person name="Strnad H."/>
            <person name="Lapidus A."/>
            <person name="Paces J."/>
            <person name="Ulbrich P."/>
            <person name="Vlcek C."/>
            <person name="Paces V."/>
            <person name="Haselkorn R."/>
        </authorList>
    </citation>
    <scope>NUCLEOTIDE SEQUENCE [LARGE SCALE GENOMIC DNA]</scope>
    <source>
        <strain>ATCC BAA-309 / NBRC 16581 / SB1003</strain>
    </source>
</reference>
<protein>
    <recommendedName>
        <fullName>Heme exporter protein C</fullName>
    </recommendedName>
    <alternativeName>
        <fullName>Cytochrome c-type biogenesis protein HelC</fullName>
    </alternativeName>
</protein>
<keyword id="KW-0997">Cell inner membrane</keyword>
<keyword id="KW-1003">Cell membrane</keyword>
<keyword id="KW-0201">Cytochrome c-type biogenesis</keyword>
<keyword id="KW-0472">Membrane</keyword>
<keyword id="KW-1185">Reference proteome</keyword>
<keyword id="KW-0812">Transmembrane</keyword>
<keyword id="KW-1133">Transmembrane helix</keyword>
<keyword id="KW-0813">Transport</keyword>
<feature type="chain" id="PRO_0000201560" description="Heme exporter protein C">
    <location>
        <begin position="1"/>
        <end position="242"/>
    </location>
</feature>
<feature type="transmembrane region" description="Helical" evidence="1">
    <location>
        <begin position="21"/>
        <end position="41"/>
    </location>
</feature>
<feature type="transmembrane region" description="Helical" evidence="1">
    <location>
        <begin position="61"/>
        <end position="81"/>
    </location>
</feature>
<feature type="transmembrane region" description="Helical" evidence="1">
    <location>
        <begin position="93"/>
        <end position="113"/>
    </location>
</feature>
<feature type="transmembrane region" description="Helical" evidence="1">
    <location>
        <begin position="127"/>
        <end position="147"/>
    </location>
</feature>
<feature type="transmembrane region" description="Helical" evidence="1">
    <location>
        <begin position="158"/>
        <end position="178"/>
    </location>
</feature>
<feature type="transmembrane region" description="Helical" evidence="1">
    <location>
        <begin position="201"/>
        <end position="221"/>
    </location>
</feature>